<name>RL33_SALTI</name>
<evidence type="ECO:0000250" key="1"/>
<evidence type="ECO:0000305" key="2"/>
<reference key="1">
    <citation type="journal article" date="2001" name="Nature">
        <title>Complete genome sequence of a multiple drug resistant Salmonella enterica serovar Typhi CT18.</title>
        <authorList>
            <person name="Parkhill J."/>
            <person name="Dougan G."/>
            <person name="James K.D."/>
            <person name="Thomson N.R."/>
            <person name="Pickard D."/>
            <person name="Wain J."/>
            <person name="Churcher C.M."/>
            <person name="Mungall K.L."/>
            <person name="Bentley S.D."/>
            <person name="Holden M.T.G."/>
            <person name="Sebaihia M."/>
            <person name="Baker S."/>
            <person name="Basham D."/>
            <person name="Brooks K."/>
            <person name="Chillingworth T."/>
            <person name="Connerton P."/>
            <person name="Cronin A."/>
            <person name="Davis P."/>
            <person name="Davies R.M."/>
            <person name="Dowd L."/>
            <person name="White N."/>
            <person name="Farrar J."/>
            <person name="Feltwell T."/>
            <person name="Hamlin N."/>
            <person name="Haque A."/>
            <person name="Hien T.T."/>
            <person name="Holroyd S."/>
            <person name="Jagels K."/>
            <person name="Krogh A."/>
            <person name="Larsen T.S."/>
            <person name="Leather S."/>
            <person name="Moule S."/>
            <person name="O'Gaora P."/>
            <person name="Parry C."/>
            <person name="Quail M.A."/>
            <person name="Rutherford K.M."/>
            <person name="Simmonds M."/>
            <person name="Skelton J."/>
            <person name="Stevens K."/>
            <person name="Whitehead S."/>
            <person name="Barrell B.G."/>
        </authorList>
    </citation>
    <scope>NUCLEOTIDE SEQUENCE [LARGE SCALE GENOMIC DNA]</scope>
    <source>
        <strain>CT18</strain>
    </source>
</reference>
<reference key="2">
    <citation type="journal article" date="2003" name="J. Bacteriol.">
        <title>Comparative genomics of Salmonella enterica serovar Typhi strains Ty2 and CT18.</title>
        <authorList>
            <person name="Deng W."/>
            <person name="Liou S.-R."/>
            <person name="Plunkett G. III"/>
            <person name="Mayhew G.F."/>
            <person name="Rose D.J."/>
            <person name="Burland V."/>
            <person name="Kodoyianni V."/>
            <person name="Schwartz D.C."/>
            <person name="Blattner F.R."/>
        </authorList>
    </citation>
    <scope>NUCLEOTIDE SEQUENCE [LARGE SCALE GENOMIC DNA]</scope>
    <source>
        <strain>ATCC 700931 / Ty2</strain>
    </source>
</reference>
<protein>
    <recommendedName>
        <fullName evidence="2">Large ribosomal subunit protein bL33</fullName>
    </recommendedName>
    <alternativeName>
        <fullName>50S ribosomal protein L33</fullName>
    </alternativeName>
</protein>
<feature type="initiator methionine" description="Removed" evidence="1">
    <location>
        <position position="1"/>
    </location>
</feature>
<feature type="chain" id="PRO_0000170207" description="Large ribosomal subunit protein bL33">
    <location>
        <begin position="2"/>
        <end position="55"/>
    </location>
</feature>
<feature type="modified residue" description="N-methylalanine" evidence="1">
    <location>
        <position position="2"/>
    </location>
</feature>
<organism>
    <name type="scientific">Salmonella typhi</name>
    <dbReference type="NCBI Taxonomy" id="90370"/>
    <lineage>
        <taxon>Bacteria</taxon>
        <taxon>Pseudomonadati</taxon>
        <taxon>Pseudomonadota</taxon>
        <taxon>Gammaproteobacteria</taxon>
        <taxon>Enterobacterales</taxon>
        <taxon>Enterobacteriaceae</taxon>
        <taxon>Salmonella</taxon>
    </lineage>
</organism>
<sequence>MAKGIREKIKLVSSAGTGHFYTTTKNKRTKPEKLELKKFDPVVRQHVIYKEAKIK</sequence>
<comment type="subunit">
    <text evidence="1">Part of the 50S ribosomal subunit. Cross-links to the P and E site tRNAs (By similarity).</text>
</comment>
<comment type="miscellaneous">
    <text evidence="1">Surface exposed on the 50S subunit.</text>
</comment>
<comment type="similarity">
    <text evidence="2">Belongs to the bacterial ribosomal protein bL33 family.</text>
</comment>
<gene>
    <name type="primary">rpmG</name>
    <name type="ordered locus">STY4067</name>
    <name type="ordered locus">t3791</name>
</gene>
<keyword id="KW-0488">Methylation</keyword>
<keyword id="KW-0687">Ribonucleoprotein</keyword>
<keyword id="KW-0689">Ribosomal protein</keyword>
<keyword id="KW-0694">RNA-binding</keyword>
<keyword id="KW-0820">tRNA-binding</keyword>
<proteinExistence type="inferred from homology"/>
<dbReference type="EMBL" id="AL513382">
    <property type="protein sequence ID" value="CAD03266.1"/>
    <property type="molecule type" value="Genomic_DNA"/>
</dbReference>
<dbReference type="EMBL" id="AE014613">
    <property type="protein sequence ID" value="AAO71273.1"/>
    <property type="molecule type" value="Genomic_DNA"/>
</dbReference>
<dbReference type="RefSeq" id="NP_458199.1">
    <property type="nucleotide sequence ID" value="NC_003198.1"/>
</dbReference>
<dbReference type="RefSeq" id="WP_001051798.1">
    <property type="nucleotide sequence ID" value="NZ_WSUR01000001.1"/>
</dbReference>
<dbReference type="SMR" id="P0A7P3"/>
<dbReference type="IntAct" id="P0A7P3">
    <property type="interactions" value="1"/>
</dbReference>
<dbReference type="STRING" id="220341.gene:17587910"/>
<dbReference type="GeneID" id="97607673"/>
<dbReference type="KEGG" id="stt:t3791"/>
<dbReference type="KEGG" id="sty:STY4067"/>
<dbReference type="PATRIC" id="fig|220341.7.peg.4152"/>
<dbReference type="eggNOG" id="COG0267">
    <property type="taxonomic scope" value="Bacteria"/>
</dbReference>
<dbReference type="HOGENOM" id="CLU_190949_1_1_6"/>
<dbReference type="OMA" id="RMTLRKY"/>
<dbReference type="OrthoDB" id="21586at2"/>
<dbReference type="Proteomes" id="UP000000541">
    <property type="component" value="Chromosome"/>
</dbReference>
<dbReference type="Proteomes" id="UP000002670">
    <property type="component" value="Chromosome"/>
</dbReference>
<dbReference type="GO" id="GO:0022625">
    <property type="term" value="C:cytosolic large ribosomal subunit"/>
    <property type="evidence" value="ECO:0007669"/>
    <property type="project" value="TreeGrafter"/>
</dbReference>
<dbReference type="GO" id="GO:0003735">
    <property type="term" value="F:structural constituent of ribosome"/>
    <property type="evidence" value="ECO:0007669"/>
    <property type="project" value="InterPro"/>
</dbReference>
<dbReference type="GO" id="GO:0000049">
    <property type="term" value="F:tRNA binding"/>
    <property type="evidence" value="ECO:0007669"/>
    <property type="project" value="UniProtKB-KW"/>
</dbReference>
<dbReference type="GO" id="GO:0006412">
    <property type="term" value="P:translation"/>
    <property type="evidence" value="ECO:0007669"/>
    <property type="project" value="UniProtKB-UniRule"/>
</dbReference>
<dbReference type="FunFam" id="2.20.28.120:FF:000001">
    <property type="entry name" value="50S ribosomal protein L33"/>
    <property type="match status" value="1"/>
</dbReference>
<dbReference type="Gene3D" id="2.20.28.120">
    <property type="entry name" value="Ribosomal protein L33"/>
    <property type="match status" value="1"/>
</dbReference>
<dbReference type="HAMAP" id="MF_00294">
    <property type="entry name" value="Ribosomal_bL33"/>
    <property type="match status" value="1"/>
</dbReference>
<dbReference type="InterPro" id="IPR001705">
    <property type="entry name" value="Ribosomal_bL33"/>
</dbReference>
<dbReference type="InterPro" id="IPR018264">
    <property type="entry name" value="Ribosomal_bL33_CS"/>
</dbReference>
<dbReference type="InterPro" id="IPR038584">
    <property type="entry name" value="Ribosomal_bL33_sf"/>
</dbReference>
<dbReference type="InterPro" id="IPR011332">
    <property type="entry name" value="Ribosomal_zn-bd"/>
</dbReference>
<dbReference type="NCBIfam" id="NF001860">
    <property type="entry name" value="PRK00595.1"/>
    <property type="match status" value="1"/>
</dbReference>
<dbReference type="NCBIfam" id="TIGR01023">
    <property type="entry name" value="rpmG_bact"/>
    <property type="match status" value="1"/>
</dbReference>
<dbReference type="PANTHER" id="PTHR15238">
    <property type="entry name" value="54S RIBOSOMAL PROTEIN L39, MITOCHONDRIAL"/>
    <property type="match status" value="1"/>
</dbReference>
<dbReference type="PANTHER" id="PTHR15238:SF1">
    <property type="entry name" value="LARGE RIBOSOMAL SUBUNIT PROTEIN BL33M"/>
    <property type="match status" value="1"/>
</dbReference>
<dbReference type="Pfam" id="PF00471">
    <property type="entry name" value="Ribosomal_L33"/>
    <property type="match status" value="1"/>
</dbReference>
<dbReference type="SUPFAM" id="SSF57829">
    <property type="entry name" value="Zn-binding ribosomal proteins"/>
    <property type="match status" value="1"/>
</dbReference>
<dbReference type="PROSITE" id="PS00582">
    <property type="entry name" value="RIBOSOMAL_L33"/>
    <property type="match status" value="1"/>
</dbReference>
<accession>P0A7P3</accession>
<accession>P02436</accession>